<feature type="initiator methionine" description="Removed">
    <location>
        <position position="1"/>
    </location>
</feature>
<feature type="chain" id="PRO_0000204046" description="Aliphatic nitrilase">
    <location>
        <begin position="2"/>
        <end position="366"/>
    </location>
</feature>
<feature type="domain" description="CN hydrolase" evidence="1">
    <location>
        <begin position="8"/>
        <end position="282"/>
    </location>
</feature>
<feature type="region of interest" description="Disordered" evidence="3">
    <location>
        <begin position="346"/>
        <end position="366"/>
    </location>
</feature>
<feature type="compositionally biased region" description="Basic and acidic residues" evidence="3">
    <location>
        <begin position="355"/>
        <end position="366"/>
    </location>
</feature>
<feature type="active site" description="Proton acceptor" evidence="1">
    <location>
        <position position="48"/>
    </location>
</feature>
<feature type="active site" description="Proton donor" evidence="1">
    <location>
        <position position="131"/>
    </location>
</feature>
<feature type="active site" description="Nucleophile" evidence="1 2">
    <location>
        <position position="165"/>
    </location>
</feature>
<feature type="mutagenesis site" description="100% loss of activity." evidence="4">
    <original>C</original>
    <variation>S</variation>
    <variation>A</variation>
    <location>
        <position position="165"/>
    </location>
</feature>
<reference key="1">
    <citation type="journal article" date="1992" name="J. Biol. Chem.">
        <title>Nitrilase from Rhodococcus rhodochrous J1. Sequencing and overexpression of the gene and identification of an essential cysteine residue.</title>
        <authorList>
            <person name="Kobayashi M."/>
            <person name="Komeda H."/>
            <person name="Yanaka N."/>
            <person name="Nagasawa T."/>
            <person name="Yamada H."/>
        </authorList>
    </citation>
    <scope>NUCLEOTIDE SEQUENCE [GENOMIC DNA]</scope>
    <scope>PARTIAL PROTEIN SEQUENCE</scope>
    <scope>MUTAGENESIS OF CYS-165</scope>
    <source>
        <strain>J1</strain>
    </source>
</reference>
<keyword id="KW-0903">Direct protein sequencing</keyword>
<keyword id="KW-0378">Hydrolase</keyword>
<name>NRL2_RHORH</name>
<dbReference type="EC" id="3.5.5.7"/>
<dbReference type="EMBL" id="D11425">
    <property type="protein sequence ID" value="BAA01994.1"/>
    <property type="molecule type" value="Genomic_DNA"/>
</dbReference>
<dbReference type="EMBL" id="D67026">
    <property type="protein sequence ID" value="BAA11037.1"/>
    <property type="molecule type" value="Genomic_DNA"/>
</dbReference>
<dbReference type="PIR" id="A45070">
    <property type="entry name" value="A45070"/>
</dbReference>
<dbReference type="SMR" id="Q03217"/>
<dbReference type="BRENDA" id="3.5.5.7">
    <property type="organism ID" value="5395"/>
</dbReference>
<dbReference type="GO" id="GO:0018762">
    <property type="term" value="F:aliphatic nitrilase activity"/>
    <property type="evidence" value="ECO:0007669"/>
    <property type="project" value="UniProtKB-EC"/>
</dbReference>
<dbReference type="CDD" id="cd07564">
    <property type="entry name" value="nitrilases_CHs"/>
    <property type="match status" value="1"/>
</dbReference>
<dbReference type="Gene3D" id="3.60.110.10">
    <property type="entry name" value="Carbon-nitrogen hydrolase"/>
    <property type="match status" value="1"/>
</dbReference>
<dbReference type="InterPro" id="IPR003010">
    <property type="entry name" value="C-N_Hydrolase"/>
</dbReference>
<dbReference type="InterPro" id="IPR036526">
    <property type="entry name" value="C-N_Hydrolase_sf"/>
</dbReference>
<dbReference type="InterPro" id="IPR000132">
    <property type="entry name" value="Nitrilase/CN_hydratase_CS"/>
</dbReference>
<dbReference type="InterPro" id="IPR044149">
    <property type="entry name" value="Nitrilases_CHs"/>
</dbReference>
<dbReference type="PANTHER" id="PTHR46044:SF14">
    <property type="entry name" value="ARYLACETONITRILASE"/>
    <property type="match status" value="1"/>
</dbReference>
<dbReference type="PANTHER" id="PTHR46044">
    <property type="entry name" value="NITRILASE"/>
    <property type="match status" value="1"/>
</dbReference>
<dbReference type="Pfam" id="PF00795">
    <property type="entry name" value="CN_hydrolase"/>
    <property type="match status" value="1"/>
</dbReference>
<dbReference type="SUPFAM" id="SSF56317">
    <property type="entry name" value="Carbon-nitrogen hydrolase"/>
    <property type="match status" value="1"/>
</dbReference>
<dbReference type="PROSITE" id="PS50263">
    <property type="entry name" value="CN_HYDROLASE"/>
    <property type="match status" value="1"/>
</dbReference>
<dbReference type="PROSITE" id="PS00920">
    <property type="entry name" value="NITRIL_CHT_1"/>
    <property type="match status" value="1"/>
</dbReference>
<dbReference type="PROSITE" id="PS00921">
    <property type="entry name" value="NITRIL_CHT_2"/>
    <property type="match status" value="1"/>
</dbReference>
<comment type="catalytic activity">
    <reaction>
        <text>an aliphatic nitrile + 2 H2O = a carboxylate + NH4(+)</text>
        <dbReference type="Rhea" id="RHEA:46188"/>
        <dbReference type="ChEBI" id="CHEBI:15377"/>
        <dbReference type="ChEBI" id="CHEBI:28938"/>
        <dbReference type="ChEBI" id="CHEBI:29067"/>
        <dbReference type="ChEBI" id="CHEBI:80291"/>
        <dbReference type="EC" id="3.5.5.7"/>
    </reaction>
</comment>
<comment type="subunit">
    <text>Homodimer.</text>
</comment>
<comment type="similarity">
    <text evidence="5">Belongs to the carbon-nitrogen hydrolase superfamily. Nitrilase family.</text>
</comment>
<gene>
    <name type="primary">nitA</name>
</gene>
<sequence>MVEYTNTFKVAAVQAQPVWFDAAKTVDKTVSIIAEAARNGCELVAFPEVFIPGYPYHIWVDSPLAGMAKFAVRYHENSLTMDSPHVQRLLDAARDHNIAVVVGISERDGGSLYMTQLVIDADGQLVARRRKLKPTHVERSVYGEGNGSDISVYDMPFARLGALNCWEHFQTLTKYAMYSMHEQVHVASWPGMSLYQPEVPAFGVDAQLTATRMYALEGQTFVVCTTQVVTPEAHEFFCDNDEQRKLIGRGGGFARIIGPDGRDLATPLAEDEEGILYADIDLSAITLAKQAADPVGHYSRPDVLSLNFNQRHTTPVNTAISTIHATHTLVPQSGALDGVRELNGADEQRALPSTHSDETDRATASI</sequence>
<evidence type="ECO:0000255" key="1">
    <source>
        <dbReference type="PROSITE-ProRule" id="PRU00054"/>
    </source>
</evidence>
<evidence type="ECO:0000255" key="2">
    <source>
        <dbReference type="PROSITE-ProRule" id="PRU10105"/>
    </source>
</evidence>
<evidence type="ECO:0000256" key="3">
    <source>
        <dbReference type="SAM" id="MobiDB-lite"/>
    </source>
</evidence>
<evidence type="ECO:0000269" key="4">
    <source>
    </source>
</evidence>
<evidence type="ECO:0000305" key="5"/>
<accession>Q03217</accession>
<protein>
    <recommendedName>
        <fullName>Aliphatic nitrilase</fullName>
        <ecNumber>3.5.5.7</ecNumber>
    </recommendedName>
</protein>
<proteinExistence type="evidence at protein level"/>
<organism>
    <name type="scientific">Rhodococcus rhodochrous</name>
    <dbReference type="NCBI Taxonomy" id="1829"/>
    <lineage>
        <taxon>Bacteria</taxon>
        <taxon>Bacillati</taxon>
        <taxon>Actinomycetota</taxon>
        <taxon>Actinomycetes</taxon>
        <taxon>Mycobacteriales</taxon>
        <taxon>Nocardiaceae</taxon>
        <taxon>Rhodococcus</taxon>
    </lineage>
</organism>